<gene>
    <name evidence="10" type="primary">Msl3</name>
    <name type="synonym">Msl31</name>
    <name type="synonym">Msl3l1</name>
</gene>
<evidence type="ECO:0000250" key="1">
    <source>
        <dbReference type="UniProtKB" id="Q8N5Y2"/>
    </source>
</evidence>
<evidence type="ECO:0000250" key="2">
    <source>
        <dbReference type="UniProtKB" id="Q9D1P2"/>
    </source>
</evidence>
<evidence type="ECO:0000255" key="3"/>
<evidence type="ECO:0000255" key="4">
    <source>
        <dbReference type="PROSITE-ProRule" id="PRU00972"/>
    </source>
</evidence>
<evidence type="ECO:0000256" key="5">
    <source>
        <dbReference type="SAM" id="MobiDB-lite"/>
    </source>
</evidence>
<evidence type="ECO:0000269" key="6">
    <source>
    </source>
</evidence>
<evidence type="ECO:0000269" key="7">
    <source>
    </source>
</evidence>
<evidence type="ECO:0000269" key="8">
    <source>
    </source>
</evidence>
<evidence type="ECO:0000303" key="9">
    <source>
    </source>
</evidence>
<evidence type="ECO:0000303" key="10">
    <source>
    </source>
</evidence>
<evidence type="ECO:0000312" key="11">
    <source>
        <dbReference type="MGI" id="MGI:1341851"/>
    </source>
</evidence>
<evidence type="ECO:0007744" key="12">
    <source>
    </source>
</evidence>
<protein>
    <recommendedName>
        <fullName evidence="11">MSL complex subunit 3</fullName>
    </recommendedName>
    <alternativeName>
        <fullName evidence="10">Male-specific lethal 3 homolog</fullName>
    </alternativeName>
    <alternativeName>
        <fullName>Male-specific lethal-3 homolog 1</fullName>
    </alternativeName>
    <alternativeName>
        <fullName>Male-specific lethal-3 protein-like 1</fullName>
        <shortName>MSL3-like 1</shortName>
    </alternativeName>
</protein>
<proteinExistence type="evidence at protein level"/>
<dbReference type="EMBL" id="AF117066">
    <property type="protein sequence ID" value="AAD38500.2"/>
    <property type="molecule type" value="mRNA"/>
</dbReference>
<dbReference type="EMBL" id="AL671489">
    <property type="status" value="NOT_ANNOTATED_CDS"/>
    <property type="molecule type" value="Genomic_DNA"/>
</dbReference>
<dbReference type="EMBL" id="BC010226">
    <property type="protein sequence ID" value="AAH10226.1"/>
    <property type="molecule type" value="mRNA"/>
</dbReference>
<dbReference type="CCDS" id="CCDS41211.1">
    <molecule id="Q9WVG9-2"/>
</dbReference>
<dbReference type="CCDS" id="CCDS90775.1">
    <molecule id="Q9WVG9-1"/>
</dbReference>
<dbReference type="RefSeq" id="NP_001357720.1">
    <molecule id="Q9WVG9-1"/>
    <property type="nucleotide sequence ID" value="NM_001370791.1"/>
</dbReference>
<dbReference type="RefSeq" id="NP_034962.2">
    <molecule id="Q9WVG9-2"/>
    <property type="nucleotide sequence ID" value="NM_010832.5"/>
</dbReference>
<dbReference type="RefSeq" id="XP_006528804.1">
    <property type="nucleotide sequence ID" value="XM_006528741.3"/>
</dbReference>
<dbReference type="SMR" id="Q9WVG9"/>
<dbReference type="BioGRID" id="201532">
    <property type="interactions" value="8"/>
</dbReference>
<dbReference type="ComplexPortal" id="CPX-859">
    <property type="entry name" value="MSL histone acetyltransferase complex"/>
</dbReference>
<dbReference type="FunCoup" id="Q9WVG9">
    <property type="interactions" value="2252"/>
</dbReference>
<dbReference type="IntAct" id="Q9WVG9">
    <property type="interactions" value="1"/>
</dbReference>
<dbReference type="STRING" id="10090.ENSMUSP00000107765"/>
<dbReference type="iPTMnet" id="Q9WVG9"/>
<dbReference type="PhosphoSitePlus" id="Q9WVG9"/>
<dbReference type="jPOST" id="Q9WVG9"/>
<dbReference type="PaxDb" id="10090-ENSMUSP00000107765"/>
<dbReference type="PeptideAtlas" id="Q9WVG9"/>
<dbReference type="ProteomicsDB" id="290062">
    <molecule id="Q9WVG9-1"/>
</dbReference>
<dbReference type="ProteomicsDB" id="290063">
    <molecule id="Q9WVG9-2"/>
</dbReference>
<dbReference type="Antibodypedia" id="23748">
    <property type="antibodies" value="127 antibodies from 20 providers"/>
</dbReference>
<dbReference type="DNASU" id="17692"/>
<dbReference type="Ensembl" id="ENSMUST00000033725.16">
    <molecule id="Q9WVG9-1"/>
    <property type="protein sequence ID" value="ENSMUSP00000033725.10"/>
    <property type="gene ID" value="ENSMUSG00000031358.18"/>
</dbReference>
<dbReference type="Ensembl" id="ENSMUST00000112137.2">
    <molecule id="Q9WVG9-2"/>
    <property type="protein sequence ID" value="ENSMUSP00000107765.2"/>
    <property type="gene ID" value="ENSMUSG00000031358.18"/>
</dbReference>
<dbReference type="GeneID" id="17692"/>
<dbReference type="KEGG" id="mmu:17692"/>
<dbReference type="UCSC" id="uc009uxh.2">
    <molecule id="Q9WVG9-2"/>
    <property type="organism name" value="mouse"/>
</dbReference>
<dbReference type="UCSC" id="uc009uxi.1">
    <molecule id="Q9WVG9-1"/>
    <property type="organism name" value="mouse"/>
</dbReference>
<dbReference type="AGR" id="MGI:1341851"/>
<dbReference type="CTD" id="10943"/>
<dbReference type="MGI" id="MGI:1341851">
    <property type="gene designation" value="Msl3"/>
</dbReference>
<dbReference type="VEuPathDB" id="HostDB:ENSMUSG00000031358"/>
<dbReference type="eggNOG" id="KOG3001">
    <property type="taxonomic scope" value="Eukaryota"/>
</dbReference>
<dbReference type="GeneTree" id="ENSGT00950000182965"/>
<dbReference type="HOGENOM" id="CLU_039566_5_2_1"/>
<dbReference type="InParanoid" id="Q9WVG9"/>
<dbReference type="OMA" id="DTEYAHL"/>
<dbReference type="OrthoDB" id="10044771at2759"/>
<dbReference type="PhylomeDB" id="Q9WVG9"/>
<dbReference type="TreeFam" id="TF323400"/>
<dbReference type="Reactome" id="R-MMU-3214847">
    <property type="pathway name" value="HATs acetylate histones"/>
</dbReference>
<dbReference type="BioGRID-ORCS" id="17692">
    <property type="hits" value="8 hits in 65 CRISPR screens"/>
</dbReference>
<dbReference type="ChiTaRS" id="Msl3">
    <property type="organism name" value="mouse"/>
</dbReference>
<dbReference type="PRO" id="PR:Q9WVG9"/>
<dbReference type="Proteomes" id="UP000000589">
    <property type="component" value="Chromosome X"/>
</dbReference>
<dbReference type="RNAct" id="Q9WVG9">
    <property type="molecule type" value="protein"/>
</dbReference>
<dbReference type="Bgee" id="ENSMUSG00000031358">
    <property type="expression patterns" value="Expressed in interventricular septum and 259 other cell types or tissues"/>
</dbReference>
<dbReference type="GO" id="GO:0072487">
    <property type="term" value="C:MSL complex"/>
    <property type="evidence" value="ECO:0000314"/>
    <property type="project" value="UniProtKB"/>
</dbReference>
<dbReference type="GO" id="GO:0005634">
    <property type="term" value="C:nucleus"/>
    <property type="evidence" value="ECO:0000250"/>
    <property type="project" value="UniProtKB"/>
</dbReference>
<dbReference type="GO" id="GO:0003677">
    <property type="term" value="F:DNA binding"/>
    <property type="evidence" value="ECO:0000250"/>
    <property type="project" value="UniProtKB"/>
</dbReference>
<dbReference type="GO" id="GO:0140046">
    <property type="term" value="F:histone H4K16ac reader activity"/>
    <property type="evidence" value="ECO:0000250"/>
    <property type="project" value="UniProtKB"/>
</dbReference>
<dbReference type="GO" id="GO:0045893">
    <property type="term" value="P:positive regulation of DNA-templated transcription"/>
    <property type="evidence" value="ECO:0000315"/>
    <property type="project" value="ComplexPortal"/>
</dbReference>
<dbReference type="GO" id="GO:0006355">
    <property type="term" value="P:regulation of DNA-templated transcription"/>
    <property type="evidence" value="ECO:0000250"/>
    <property type="project" value="UniProtKB"/>
</dbReference>
<dbReference type="CDD" id="cd18983">
    <property type="entry name" value="CBD_MSL3_like"/>
    <property type="match status" value="1"/>
</dbReference>
<dbReference type="FunFam" id="1.10.274.30:FF:000003">
    <property type="entry name" value="Male-specific lethal 3 homolog"/>
    <property type="match status" value="1"/>
</dbReference>
<dbReference type="FunFam" id="1.10.274.30:FF:000002">
    <property type="entry name" value="male-specific lethal 3 homolog"/>
    <property type="match status" value="1"/>
</dbReference>
<dbReference type="FunFam" id="2.30.30.140:FF:000042">
    <property type="entry name" value="male-specific lethal 3 homolog"/>
    <property type="match status" value="1"/>
</dbReference>
<dbReference type="Gene3D" id="2.30.30.140">
    <property type="match status" value="1"/>
</dbReference>
<dbReference type="Gene3D" id="1.10.274.30">
    <property type="entry name" value="MRG domain"/>
    <property type="match status" value="2"/>
</dbReference>
<dbReference type="InterPro" id="IPR016197">
    <property type="entry name" value="Chromo-like_dom_sf"/>
</dbReference>
<dbReference type="InterPro" id="IPR000953">
    <property type="entry name" value="Chromo/chromo_shadow_dom"/>
</dbReference>
<dbReference type="InterPro" id="IPR008676">
    <property type="entry name" value="MRG"/>
</dbReference>
<dbReference type="InterPro" id="IPR038217">
    <property type="entry name" value="MRG_C_sf"/>
</dbReference>
<dbReference type="InterPro" id="IPR026541">
    <property type="entry name" value="MRG_dom"/>
</dbReference>
<dbReference type="InterPro" id="IPR053820">
    <property type="entry name" value="MSL3_chromo-like"/>
</dbReference>
<dbReference type="PANTHER" id="PTHR10880:SF47">
    <property type="entry name" value="MALE-SPECIFIC LETHAL 3 HOMOLOG"/>
    <property type="match status" value="1"/>
</dbReference>
<dbReference type="PANTHER" id="PTHR10880">
    <property type="entry name" value="MORTALITY FACTOR 4-LIKE PROTEIN"/>
    <property type="match status" value="1"/>
</dbReference>
<dbReference type="Pfam" id="PF05712">
    <property type="entry name" value="MRG"/>
    <property type="match status" value="1"/>
</dbReference>
<dbReference type="Pfam" id="PF22732">
    <property type="entry name" value="MSL3_chromo-like"/>
    <property type="match status" value="1"/>
</dbReference>
<dbReference type="SMART" id="SM00298">
    <property type="entry name" value="CHROMO"/>
    <property type="match status" value="1"/>
</dbReference>
<dbReference type="SUPFAM" id="SSF54160">
    <property type="entry name" value="Chromo domain-like"/>
    <property type="match status" value="1"/>
</dbReference>
<dbReference type="PROSITE" id="PS51640">
    <property type="entry name" value="MRG"/>
    <property type="match status" value="1"/>
</dbReference>
<accession>Q9WVG9</accession>
<accession>B1AUJ7</accession>
<accession>B1AUJ8</accession>
<keyword id="KW-0025">Alternative splicing</keyword>
<keyword id="KW-0156">Chromatin regulator</keyword>
<keyword id="KW-0238">DNA-binding</keyword>
<keyword id="KW-0539">Nucleus</keyword>
<keyword id="KW-0597">Phosphoprotein</keyword>
<keyword id="KW-1185">Reference proteome</keyword>
<keyword id="KW-0804">Transcription</keyword>
<keyword id="KW-0805">Transcription regulation</keyword>
<feature type="chain" id="PRO_0000080248" description="MSL complex subunit 3">
    <location>
        <begin position="1"/>
        <end position="525"/>
    </location>
</feature>
<feature type="domain" description="Tudor-knot" evidence="3">
    <location>
        <begin position="13"/>
        <end position="72"/>
    </location>
</feature>
<feature type="domain" description="MRG" evidence="4">
    <location>
        <begin position="172"/>
        <end position="521"/>
    </location>
</feature>
<feature type="region of interest" description="Disordered" evidence="5">
    <location>
        <begin position="119"/>
        <end position="148"/>
    </location>
</feature>
<feature type="region of interest" description="Required for the histone acetyltransferase activity of the MSL complex" evidence="1">
    <location>
        <begin position="294"/>
        <end position="444"/>
    </location>
</feature>
<feature type="region of interest" description="Disordered" evidence="5">
    <location>
        <begin position="302"/>
        <end position="383"/>
    </location>
</feature>
<feature type="compositionally biased region" description="Basic and acidic residues" evidence="5">
    <location>
        <begin position="136"/>
        <end position="146"/>
    </location>
</feature>
<feature type="compositionally biased region" description="Low complexity" evidence="5">
    <location>
        <begin position="320"/>
        <end position="332"/>
    </location>
</feature>
<feature type="modified residue" description="Phosphoserine" evidence="12">
    <location>
        <position position="313"/>
    </location>
</feature>
<feature type="modified residue" description="Phosphoserine" evidence="12">
    <location>
        <position position="315"/>
    </location>
</feature>
<feature type="modified residue" description="Phosphoserine" evidence="1">
    <location>
        <position position="371"/>
    </location>
</feature>
<feature type="modified residue" description="Phosphoserine" evidence="1">
    <location>
        <position position="404"/>
    </location>
</feature>
<feature type="modified residue" description="Phosphothreonine" evidence="12">
    <location>
        <position position="409"/>
    </location>
</feature>
<feature type="modified residue" description="Phosphoserine" evidence="12">
    <location>
        <position position="411"/>
    </location>
</feature>
<feature type="modified residue" description="Phosphoserine" evidence="12">
    <location>
        <position position="415"/>
    </location>
</feature>
<feature type="splice variant" id="VSP_007638" description="In isoform 2." evidence="9">
    <location>
        <begin position="1"/>
        <end position="59"/>
    </location>
</feature>
<feature type="splice variant" id="VSP_007639" description="In isoform 2." evidence="9">
    <original>NR</original>
    <variation>MP</variation>
    <location>
        <begin position="60"/>
        <end position="61"/>
    </location>
</feature>
<comment type="function">
    <text evidence="1 2 7">Non-catalytic component of the MSL histone acetyltransferase complex, a multiprotein complex that mediates the majority of histone H4 acetylation at 'Lys-16' (H4K16ac), an epigenetic mark that prevents chromatin compaction (PubMed:24842875). The MSL complex is required for chromosome stability and genome integrity by maintaining homeostatic levels of H4K16ac (By similarity). The MSL complex is also involved in gene dosage by promoting up-regulation of genes expressed by the X chromosome. X up-regulation is required to compensate for autosomal biallelic expression (By similarity). The MSL complex also participates in gene dosage compensation by promoting expression of Tsix non-coding RNA (PubMed:24842875). Acts as a histone reader that specifically recognizes and binds histone H4 monomethylated at 'Lys-20' (H4K20Me1) in a DNA-dependent manner and is proposed to be involved in chromosomal targeting of the MSL complex. May play a role X inactivation in females (By similarity).</text>
</comment>
<comment type="subunit">
    <text evidence="6 7">Component of the MSL histone acetyltransferase complex at least composed of the KAT8/MOF, MSL1/hampin, MSL2 and MSL3 (PubMed:24842875). Interacts (via the MRG domain) with MSL1 and KAT8/MOF (PubMed:21217699).</text>
</comment>
<comment type="subcellular location">
    <subcellularLocation>
        <location evidence="1">Nucleus</location>
    </subcellularLocation>
</comment>
<comment type="alternative products">
    <event type="alternative splicing"/>
    <isoform>
        <id>Q9WVG9-1</id>
        <name>1</name>
        <sequence type="displayed"/>
    </isoform>
    <isoform>
        <id>Q9WVG9-2</id>
        <name>2</name>
        <sequence type="described" ref="VSP_007638 VSP_007639"/>
    </isoform>
</comment>
<comment type="tissue specificity">
    <text evidence="8">In testis, expression is mostly restricted to the spermatocyte stage and only in a small portion of spermatogonia.</text>
</comment>
<comment type="disruption phenotype">
    <text evidence="8">Mice with a conditional deletion in male germline do not show any phenotype: spermatogenesis is not affected.</text>
</comment>
<organism>
    <name type="scientific">Mus musculus</name>
    <name type="common">Mouse</name>
    <dbReference type="NCBI Taxonomy" id="10090"/>
    <lineage>
        <taxon>Eukaryota</taxon>
        <taxon>Metazoa</taxon>
        <taxon>Chordata</taxon>
        <taxon>Craniata</taxon>
        <taxon>Vertebrata</taxon>
        <taxon>Euteleostomi</taxon>
        <taxon>Mammalia</taxon>
        <taxon>Eutheria</taxon>
        <taxon>Euarchontoglires</taxon>
        <taxon>Glires</taxon>
        <taxon>Rodentia</taxon>
        <taxon>Myomorpha</taxon>
        <taxon>Muroidea</taxon>
        <taxon>Muridae</taxon>
        <taxon>Murinae</taxon>
        <taxon>Mus</taxon>
        <taxon>Mus</taxon>
    </lineage>
</organism>
<sequence length="525" mass="60292">MSASEGMKFQFHSGEKVLCFEPDPTKARVLYDAKIIDVIIGKDEKGRKIPEYLIHFNGWNRSWDRWAAEEHVLHDTDENRRLQRKLAKKAIARLRGTGKKKRRCRLPGVDSVLKSVPVKEKSKNDENSVSSTCHESCGEKNGGIKEHRQRRIKVKAKAKKKVLSLRSRKEMDERTITIDIPDVLKKQLEDDCYYINRRKRLVKLPCQTNIITILESYVKHFAINAAFSANERPRHHHAMMHTHMNVHYVPAEKNVDLCKEMVDGLRITFDYTLPLVLLYPYEQTQYKRVTSSKFFLPIKESTTTTNRSQEELSPSPPLLNPSTPQSTESQPPTGEPATPKRRKAEPEALQSLRRSTRHSTNCDRLSESSSSPQPKRRQQDTSASMPKLFLHLEKKTPVHSRSSSPIPLTPSKDGSAVFAGFEGRRPNEINEVLSWKLVPDNYPPGDQPPPPSYIYGAQHLLRLFVKLPEILGKMSFSEKNLKALLKHFDLFLRFLAEYHDDFFPESAYVAACEAHYSTKNPRAIY</sequence>
<reference key="1">
    <citation type="journal article" date="1999" name="Genomics">
        <title>Characterization of a novel chromo domain gene in Xp22.3 with homology to Drosophila msl-3.</title>
        <authorList>
            <person name="Prakash S.K."/>
            <person name="Van den Veyver I.B."/>
            <person name="Franco B."/>
            <person name="Volta M."/>
            <person name="Ballabio A."/>
            <person name="Zoghbi H.Y."/>
        </authorList>
    </citation>
    <scope>NUCLEOTIDE SEQUENCE [MRNA]</scope>
</reference>
<reference key="2">
    <citation type="journal article" date="2009" name="PLoS Biol.">
        <title>Lineage-specific biology revealed by a finished genome assembly of the mouse.</title>
        <authorList>
            <person name="Church D.M."/>
            <person name="Goodstadt L."/>
            <person name="Hillier L.W."/>
            <person name="Zody M.C."/>
            <person name="Goldstein S."/>
            <person name="She X."/>
            <person name="Bult C.J."/>
            <person name="Agarwala R."/>
            <person name="Cherry J.L."/>
            <person name="DiCuccio M."/>
            <person name="Hlavina W."/>
            <person name="Kapustin Y."/>
            <person name="Meric P."/>
            <person name="Maglott D."/>
            <person name="Birtle Z."/>
            <person name="Marques A.C."/>
            <person name="Graves T."/>
            <person name="Zhou S."/>
            <person name="Teague B."/>
            <person name="Potamousis K."/>
            <person name="Churas C."/>
            <person name="Place M."/>
            <person name="Herschleb J."/>
            <person name="Runnheim R."/>
            <person name="Forrest D."/>
            <person name="Amos-Landgraf J."/>
            <person name="Schwartz D.C."/>
            <person name="Cheng Z."/>
            <person name="Lindblad-Toh K."/>
            <person name="Eichler E.E."/>
            <person name="Ponting C.P."/>
        </authorList>
    </citation>
    <scope>NUCLEOTIDE SEQUENCE [LARGE SCALE GENOMIC DNA]</scope>
    <source>
        <strain>C57BL/6J</strain>
    </source>
</reference>
<reference key="3">
    <citation type="journal article" date="2004" name="Genome Res.">
        <title>The status, quality, and expansion of the NIH full-length cDNA project: the Mammalian Gene Collection (MGC).</title>
        <authorList>
            <consortium name="The MGC Project Team"/>
        </authorList>
    </citation>
    <scope>NUCLEOTIDE SEQUENCE [LARGE SCALE MRNA] (ISOFORM 2)</scope>
</reference>
<reference key="4">
    <citation type="journal article" date="2010" name="Cell">
        <title>A tissue-specific atlas of mouse protein phosphorylation and expression.</title>
        <authorList>
            <person name="Huttlin E.L."/>
            <person name="Jedrychowski M.P."/>
            <person name="Elias J.E."/>
            <person name="Goswami T."/>
            <person name="Rad R."/>
            <person name="Beausoleil S.A."/>
            <person name="Villen J."/>
            <person name="Haas W."/>
            <person name="Sowa M.E."/>
            <person name="Gygi S.P."/>
        </authorList>
    </citation>
    <scope>PHOSPHORYLATION [LARGE SCALE ANALYSIS] AT SER-313; SER-315; THR-409; SER-411 AND SER-415</scope>
    <scope>IDENTIFICATION BY MASS SPECTROMETRY [LARGE SCALE ANALYSIS]</scope>
    <source>
        <tissue>Brain</tissue>
        <tissue>Brown adipose tissue</tissue>
        <tissue>Kidney</tissue>
        <tissue>Liver</tissue>
        <tissue>Lung</tissue>
        <tissue>Spleen</tissue>
    </source>
</reference>
<reference key="5">
    <citation type="journal article" date="2011" name="Nat. Struct. Mol. Biol.">
        <title>Structural basis for MOF and MSL3 recruitment into the dosage compensation complex by MSL1.</title>
        <authorList>
            <person name="Kadlec J."/>
            <person name="Hallacli E."/>
            <person name="Lipp M."/>
            <person name="Holz H."/>
            <person name="Sanchez-Weatherby J."/>
            <person name="Cusack S."/>
            <person name="Akhtar A."/>
        </authorList>
    </citation>
    <scope>INTERACTION WITH MSL1</scope>
</reference>
<reference key="6">
    <citation type="journal article" date="2014" name="Elife">
        <title>MOF-associated complexes ensure stem cell identity and Xist repression.</title>
        <authorList>
            <person name="Chelmicki T."/>
            <person name="Duendar F."/>
            <person name="Turley M.J."/>
            <person name="Khanam T."/>
            <person name="Aktas T."/>
            <person name="Ramirez F."/>
            <person name="Gendrel A.V."/>
            <person name="Wright P.R."/>
            <person name="Videm P."/>
            <person name="Backofen R."/>
            <person name="Heard E."/>
            <person name="Manke T."/>
            <person name="Akhtar A."/>
        </authorList>
    </citation>
    <scope>FUNCTION</scope>
    <scope>IDENTIFICATION IN THE MSL COMPLEX</scope>
</reference>
<reference key="7">
    <citation type="journal article" date="2023" name="Dev. Dyn.">
        <title>Loss of function of male-specific lethal 3 (Msl3) does not affect spermatogenesis in rodents.</title>
        <authorList>
            <person name="Mitchell T.A."/>
            <person name="Lin J.M."/>
            <person name="Hicks S.M."/>
            <person name="James J.R."/>
            <person name="Rangan P."/>
            <person name="Forni P.E."/>
        </authorList>
    </citation>
    <scope>DISRUPTION PHENOTYPE</scope>
    <scope>TISSUE SPECIFICITY</scope>
</reference>
<name>MS3L1_MOUSE</name>